<accession>Q4L904</accession>
<feature type="chain" id="PRO_0000236367" description="Thiazole synthase">
    <location>
        <begin position="1"/>
        <end position="255"/>
    </location>
</feature>
<feature type="active site" description="Schiff-base intermediate with DXP" evidence="1">
    <location>
        <position position="96"/>
    </location>
</feature>
<feature type="binding site" evidence="1">
    <location>
        <position position="157"/>
    </location>
    <ligand>
        <name>1-deoxy-D-xylulose 5-phosphate</name>
        <dbReference type="ChEBI" id="CHEBI:57792"/>
    </ligand>
</feature>
<feature type="binding site" evidence="1">
    <location>
        <begin position="183"/>
        <end position="184"/>
    </location>
    <ligand>
        <name>1-deoxy-D-xylulose 5-phosphate</name>
        <dbReference type="ChEBI" id="CHEBI:57792"/>
    </ligand>
</feature>
<feature type="binding site" evidence="1">
    <location>
        <begin position="205"/>
        <end position="206"/>
    </location>
    <ligand>
        <name>1-deoxy-D-xylulose 5-phosphate</name>
        <dbReference type="ChEBI" id="CHEBI:57792"/>
    </ligand>
</feature>
<organism>
    <name type="scientific">Staphylococcus haemolyticus (strain JCSC1435)</name>
    <dbReference type="NCBI Taxonomy" id="279808"/>
    <lineage>
        <taxon>Bacteria</taxon>
        <taxon>Bacillati</taxon>
        <taxon>Bacillota</taxon>
        <taxon>Bacilli</taxon>
        <taxon>Bacillales</taxon>
        <taxon>Staphylococcaceae</taxon>
        <taxon>Staphylococcus</taxon>
    </lineage>
</organism>
<keyword id="KW-0963">Cytoplasm</keyword>
<keyword id="KW-0704">Schiff base</keyword>
<keyword id="KW-0784">Thiamine biosynthesis</keyword>
<keyword id="KW-0808">Transferase</keyword>
<comment type="function">
    <text evidence="1">Catalyzes the rearrangement of 1-deoxy-D-xylulose 5-phosphate (DXP) to produce the thiazole phosphate moiety of thiamine. Sulfur is provided by the thiocarboxylate moiety of the carrier protein ThiS. In vitro, sulfur can be provided by H(2)S.</text>
</comment>
<comment type="catalytic activity">
    <reaction evidence="1">
        <text>[ThiS sulfur-carrier protein]-C-terminal-Gly-aminoethanethioate + 2-iminoacetate + 1-deoxy-D-xylulose 5-phosphate = [ThiS sulfur-carrier protein]-C-terminal Gly-Gly + 2-[(2R,5Z)-2-carboxy-4-methylthiazol-5(2H)-ylidene]ethyl phosphate + 2 H2O + H(+)</text>
        <dbReference type="Rhea" id="RHEA:26297"/>
        <dbReference type="Rhea" id="RHEA-COMP:12909"/>
        <dbReference type="Rhea" id="RHEA-COMP:19908"/>
        <dbReference type="ChEBI" id="CHEBI:15377"/>
        <dbReference type="ChEBI" id="CHEBI:15378"/>
        <dbReference type="ChEBI" id="CHEBI:57792"/>
        <dbReference type="ChEBI" id="CHEBI:62899"/>
        <dbReference type="ChEBI" id="CHEBI:77846"/>
        <dbReference type="ChEBI" id="CHEBI:90778"/>
        <dbReference type="ChEBI" id="CHEBI:232372"/>
        <dbReference type="EC" id="2.8.1.10"/>
    </reaction>
</comment>
<comment type="pathway">
    <text evidence="1">Cofactor biosynthesis; thiamine diphosphate biosynthesis.</text>
</comment>
<comment type="subunit">
    <text evidence="1">Homotetramer. Forms heterodimers with either ThiH or ThiS.</text>
</comment>
<comment type="subcellular location">
    <subcellularLocation>
        <location evidence="1">Cytoplasm</location>
    </subcellularLocation>
</comment>
<comment type="similarity">
    <text evidence="1">Belongs to the ThiG family.</text>
</comment>
<reference key="1">
    <citation type="journal article" date="2005" name="J. Bacteriol.">
        <title>Whole-genome sequencing of Staphylococcus haemolyticus uncovers the extreme plasticity of its genome and the evolution of human-colonizing staphylococcal species.</title>
        <authorList>
            <person name="Takeuchi F."/>
            <person name="Watanabe S."/>
            <person name="Baba T."/>
            <person name="Yuzawa H."/>
            <person name="Ito T."/>
            <person name="Morimoto Y."/>
            <person name="Kuroda M."/>
            <person name="Cui L."/>
            <person name="Takahashi M."/>
            <person name="Ankai A."/>
            <person name="Baba S."/>
            <person name="Fukui S."/>
            <person name="Lee J.C."/>
            <person name="Hiramatsu K."/>
        </authorList>
    </citation>
    <scope>NUCLEOTIDE SEQUENCE [LARGE SCALE GENOMIC DNA]</scope>
    <source>
        <strain>JCSC1435</strain>
    </source>
</reference>
<sequence>MFKIGNLELQSRLLLGTGKFENEDVQTEAIKASETNVLTFAVRRMNLYDKNLPNPLANINLKDFITFPNTASAKTAEEAIRIAEIAKHAGVCDMIKVEVIGDDETLLPDPFETYEACKVLLERGYIVCPYISNDVVLAKRLEDLGVHAVMPLASPIGTGRGINNQLNLSYIIKNSNVPVIVDAGIGSPKDACHAMELGADGILLNTAVSGAKDPVKMAEAMKLGIHAGRLSYEAGRIPVKYTAQASSPTEGLGFL</sequence>
<protein>
    <recommendedName>
        <fullName evidence="1">Thiazole synthase</fullName>
        <ecNumber evidence="1">2.8.1.10</ecNumber>
    </recommendedName>
</protein>
<evidence type="ECO:0000255" key="1">
    <source>
        <dbReference type="HAMAP-Rule" id="MF_00443"/>
    </source>
</evidence>
<name>THIG_STAHJ</name>
<proteinExistence type="inferred from homology"/>
<dbReference type="EC" id="2.8.1.10" evidence="1"/>
<dbReference type="EMBL" id="AP006716">
    <property type="protein sequence ID" value="BAE03871.1"/>
    <property type="molecule type" value="Genomic_DNA"/>
</dbReference>
<dbReference type="RefSeq" id="WP_011274887.1">
    <property type="nucleotide sequence ID" value="NC_007168.1"/>
</dbReference>
<dbReference type="SMR" id="Q4L904"/>
<dbReference type="KEGG" id="sha:SH0562"/>
<dbReference type="eggNOG" id="COG2022">
    <property type="taxonomic scope" value="Bacteria"/>
</dbReference>
<dbReference type="HOGENOM" id="CLU_062233_1_0_9"/>
<dbReference type="OrthoDB" id="9805935at2"/>
<dbReference type="UniPathway" id="UPA00060"/>
<dbReference type="Proteomes" id="UP000000543">
    <property type="component" value="Chromosome"/>
</dbReference>
<dbReference type="GO" id="GO:0005737">
    <property type="term" value="C:cytoplasm"/>
    <property type="evidence" value="ECO:0007669"/>
    <property type="project" value="UniProtKB-SubCell"/>
</dbReference>
<dbReference type="GO" id="GO:1990107">
    <property type="term" value="F:thiazole synthase activity"/>
    <property type="evidence" value="ECO:0007669"/>
    <property type="project" value="UniProtKB-EC"/>
</dbReference>
<dbReference type="GO" id="GO:0009229">
    <property type="term" value="P:thiamine diphosphate biosynthetic process"/>
    <property type="evidence" value="ECO:0007669"/>
    <property type="project" value="UniProtKB-UniRule"/>
</dbReference>
<dbReference type="CDD" id="cd04728">
    <property type="entry name" value="ThiG"/>
    <property type="match status" value="1"/>
</dbReference>
<dbReference type="Gene3D" id="3.20.20.70">
    <property type="entry name" value="Aldolase class I"/>
    <property type="match status" value="1"/>
</dbReference>
<dbReference type="HAMAP" id="MF_00443">
    <property type="entry name" value="ThiG"/>
    <property type="match status" value="1"/>
</dbReference>
<dbReference type="InterPro" id="IPR013785">
    <property type="entry name" value="Aldolase_TIM"/>
</dbReference>
<dbReference type="InterPro" id="IPR033983">
    <property type="entry name" value="Thiazole_synthase_ThiG"/>
</dbReference>
<dbReference type="InterPro" id="IPR008867">
    <property type="entry name" value="ThiG"/>
</dbReference>
<dbReference type="PANTHER" id="PTHR34266">
    <property type="entry name" value="THIAZOLE SYNTHASE"/>
    <property type="match status" value="1"/>
</dbReference>
<dbReference type="PANTHER" id="PTHR34266:SF2">
    <property type="entry name" value="THIAZOLE SYNTHASE"/>
    <property type="match status" value="1"/>
</dbReference>
<dbReference type="Pfam" id="PF05690">
    <property type="entry name" value="ThiG"/>
    <property type="match status" value="1"/>
</dbReference>
<dbReference type="SUPFAM" id="SSF110399">
    <property type="entry name" value="ThiG-like"/>
    <property type="match status" value="1"/>
</dbReference>
<gene>
    <name evidence="1" type="primary">thiG</name>
    <name type="ordered locus">SH0562</name>
</gene>